<accession>B7HB98</accession>
<reference key="1">
    <citation type="submission" date="2008-10" db="EMBL/GenBank/DDBJ databases">
        <title>Genome sequence of Bacillus cereus B4264.</title>
        <authorList>
            <person name="Dodson R.J."/>
            <person name="Durkin A.S."/>
            <person name="Rosovitz M.J."/>
            <person name="Rasko D.A."/>
            <person name="Hoffmaster A."/>
            <person name="Ravel J."/>
            <person name="Sutton G."/>
        </authorList>
    </citation>
    <scope>NUCLEOTIDE SEQUENCE [LARGE SCALE GENOMIC DNA]</scope>
    <source>
        <strain>B4264</strain>
    </source>
</reference>
<dbReference type="EC" id="1.4.4.2" evidence="1"/>
<dbReference type="EMBL" id="CP001176">
    <property type="protein sequence ID" value="ACK61647.1"/>
    <property type="molecule type" value="Genomic_DNA"/>
</dbReference>
<dbReference type="RefSeq" id="WP_000795702.1">
    <property type="nucleotide sequence ID" value="NZ_VEHB01000002.1"/>
</dbReference>
<dbReference type="SMR" id="B7HB98"/>
<dbReference type="GeneID" id="72450910"/>
<dbReference type="KEGG" id="bcb:BCB4264_A4337"/>
<dbReference type="HOGENOM" id="CLU_004620_5_0_9"/>
<dbReference type="Proteomes" id="UP000007096">
    <property type="component" value="Chromosome"/>
</dbReference>
<dbReference type="GO" id="GO:0005829">
    <property type="term" value="C:cytosol"/>
    <property type="evidence" value="ECO:0007669"/>
    <property type="project" value="TreeGrafter"/>
</dbReference>
<dbReference type="GO" id="GO:0005960">
    <property type="term" value="C:glycine cleavage complex"/>
    <property type="evidence" value="ECO:0007669"/>
    <property type="project" value="TreeGrafter"/>
</dbReference>
<dbReference type="GO" id="GO:0016594">
    <property type="term" value="F:glycine binding"/>
    <property type="evidence" value="ECO:0007669"/>
    <property type="project" value="TreeGrafter"/>
</dbReference>
<dbReference type="GO" id="GO:0004375">
    <property type="term" value="F:glycine dehydrogenase (decarboxylating) activity"/>
    <property type="evidence" value="ECO:0007669"/>
    <property type="project" value="UniProtKB-EC"/>
</dbReference>
<dbReference type="GO" id="GO:0030170">
    <property type="term" value="F:pyridoxal phosphate binding"/>
    <property type="evidence" value="ECO:0007669"/>
    <property type="project" value="TreeGrafter"/>
</dbReference>
<dbReference type="GO" id="GO:0019464">
    <property type="term" value="P:glycine decarboxylation via glycine cleavage system"/>
    <property type="evidence" value="ECO:0007669"/>
    <property type="project" value="UniProtKB-UniRule"/>
</dbReference>
<dbReference type="CDD" id="cd00613">
    <property type="entry name" value="GDC-P"/>
    <property type="match status" value="1"/>
</dbReference>
<dbReference type="FunFam" id="3.40.640.10:FF:000034">
    <property type="entry name" value="Probable glycine dehydrogenase (decarboxylating) subunit 2"/>
    <property type="match status" value="1"/>
</dbReference>
<dbReference type="FunFam" id="3.90.1150.10:FF:000014">
    <property type="entry name" value="Probable glycine dehydrogenase (decarboxylating) subunit 2"/>
    <property type="match status" value="1"/>
</dbReference>
<dbReference type="Gene3D" id="6.20.440.10">
    <property type="match status" value="1"/>
</dbReference>
<dbReference type="Gene3D" id="3.90.1150.10">
    <property type="entry name" value="Aspartate Aminotransferase, domain 1"/>
    <property type="match status" value="1"/>
</dbReference>
<dbReference type="Gene3D" id="3.40.640.10">
    <property type="entry name" value="Type I PLP-dependent aspartate aminotransferase-like (Major domain)"/>
    <property type="match status" value="1"/>
</dbReference>
<dbReference type="HAMAP" id="MF_00713">
    <property type="entry name" value="GcvPB"/>
    <property type="match status" value="1"/>
</dbReference>
<dbReference type="InterPro" id="IPR023012">
    <property type="entry name" value="GcvPB"/>
</dbReference>
<dbReference type="InterPro" id="IPR049316">
    <property type="entry name" value="GDC-P_C"/>
</dbReference>
<dbReference type="InterPro" id="IPR049315">
    <property type="entry name" value="GDC-P_N"/>
</dbReference>
<dbReference type="InterPro" id="IPR020581">
    <property type="entry name" value="GDC_P"/>
</dbReference>
<dbReference type="InterPro" id="IPR015424">
    <property type="entry name" value="PyrdxlP-dep_Trfase"/>
</dbReference>
<dbReference type="InterPro" id="IPR015421">
    <property type="entry name" value="PyrdxlP-dep_Trfase_major"/>
</dbReference>
<dbReference type="InterPro" id="IPR015422">
    <property type="entry name" value="PyrdxlP-dep_Trfase_small"/>
</dbReference>
<dbReference type="NCBIfam" id="NF003346">
    <property type="entry name" value="PRK04366.1"/>
    <property type="match status" value="1"/>
</dbReference>
<dbReference type="PANTHER" id="PTHR11773:SF1">
    <property type="entry name" value="GLYCINE DEHYDROGENASE (DECARBOXYLATING), MITOCHONDRIAL"/>
    <property type="match status" value="1"/>
</dbReference>
<dbReference type="PANTHER" id="PTHR11773">
    <property type="entry name" value="GLYCINE DEHYDROGENASE, DECARBOXYLATING"/>
    <property type="match status" value="1"/>
</dbReference>
<dbReference type="Pfam" id="PF21478">
    <property type="entry name" value="GcvP2_C"/>
    <property type="match status" value="1"/>
</dbReference>
<dbReference type="Pfam" id="PF02347">
    <property type="entry name" value="GDC-P"/>
    <property type="match status" value="1"/>
</dbReference>
<dbReference type="SUPFAM" id="SSF53383">
    <property type="entry name" value="PLP-dependent transferases"/>
    <property type="match status" value="1"/>
</dbReference>
<name>GCSPB_BACC4</name>
<proteinExistence type="inferred from homology"/>
<protein>
    <recommendedName>
        <fullName evidence="1">Probable glycine dehydrogenase (decarboxylating) subunit 2</fullName>
        <ecNumber evidence="1">1.4.4.2</ecNumber>
    </recommendedName>
    <alternativeName>
        <fullName evidence="1">Glycine cleavage system P-protein subunit 2</fullName>
    </alternativeName>
    <alternativeName>
        <fullName evidence="1">Glycine decarboxylase subunit 2</fullName>
    </alternativeName>
    <alternativeName>
        <fullName evidence="1">Glycine dehydrogenase (aminomethyl-transferring) subunit 2</fullName>
    </alternativeName>
</protein>
<keyword id="KW-0560">Oxidoreductase</keyword>
<keyword id="KW-0663">Pyridoxal phosphate</keyword>
<organism>
    <name type="scientific">Bacillus cereus (strain B4264)</name>
    <dbReference type="NCBI Taxonomy" id="405532"/>
    <lineage>
        <taxon>Bacteria</taxon>
        <taxon>Bacillati</taxon>
        <taxon>Bacillota</taxon>
        <taxon>Bacilli</taxon>
        <taxon>Bacillales</taxon>
        <taxon>Bacillaceae</taxon>
        <taxon>Bacillus</taxon>
        <taxon>Bacillus cereus group</taxon>
    </lineage>
</organism>
<feature type="chain" id="PRO_1000132493" description="Probable glycine dehydrogenase (decarboxylating) subunit 2">
    <location>
        <begin position="1"/>
        <end position="491"/>
    </location>
</feature>
<feature type="modified residue" description="N6-(pyridoxal phosphate)lysine" evidence="1">
    <location>
        <position position="273"/>
    </location>
</feature>
<evidence type="ECO:0000255" key="1">
    <source>
        <dbReference type="HAMAP-Rule" id="MF_00713"/>
    </source>
</evidence>
<sequence>MKNQDQALIFEVSKEGRIGYSLPKLDVEEVKLEDVFESDYIRVEDAELPEVSELDIMRHYTALSNRNHGVDSGFYPLGSCTMKYNPKINESVARFAGFANIHPLQDEKTVQGAMELMYDLQEHLIEITGMDTVTLQPAAGAHGEWTGLMLIRAYHEANGDFNRTKVIVPDSAHGTNPASATVAGFETITVKSNENGLVDLEDLKRVVNEETAALMLTNPNTLGLFEENILEMAEIVHNAGGKLYYDGANLNAVLSQARPGDMGFDVVHLNLHKTFTGPHGGGGPGSGPVGVKADLIPYLPKPILEKTENGYHFNYDRPEAIGRVKPFYGNFGINVRAYTYIRSMGPDGLRAVTEYAVLNANYMMRRLAPFYDLPFDRHCKHEFVLSGRRQKKLGVRTLDIAKRLLDFGYHPPTIYFPLNVEECIMIEPTETESKETLDGFIDKMIQIAKEVEENPEVVQEAPHTTVIKRLDETMAARKPVLRYAKPAPVQV</sequence>
<gene>
    <name evidence="1" type="primary">gcvPB</name>
    <name type="ordered locus">BCB4264_A4337</name>
</gene>
<comment type="function">
    <text evidence="1">The glycine cleavage system catalyzes the degradation of glycine. The P protein binds the alpha-amino group of glycine through its pyridoxal phosphate cofactor; CO(2) is released and the remaining methylamine moiety is then transferred to the lipoamide cofactor of the H protein.</text>
</comment>
<comment type="catalytic activity">
    <reaction evidence="1">
        <text>N(6)-[(R)-lipoyl]-L-lysyl-[glycine-cleavage complex H protein] + glycine + H(+) = N(6)-[(R)-S(8)-aminomethyldihydrolipoyl]-L-lysyl-[glycine-cleavage complex H protein] + CO2</text>
        <dbReference type="Rhea" id="RHEA:24304"/>
        <dbReference type="Rhea" id="RHEA-COMP:10494"/>
        <dbReference type="Rhea" id="RHEA-COMP:10495"/>
        <dbReference type="ChEBI" id="CHEBI:15378"/>
        <dbReference type="ChEBI" id="CHEBI:16526"/>
        <dbReference type="ChEBI" id="CHEBI:57305"/>
        <dbReference type="ChEBI" id="CHEBI:83099"/>
        <dbReference type="ChEBI" id="CHEBI:83143"/>
        <dbReference type="EC" id="1.4.4.2"/>
    </reaction>
</comment>
<comment type="cofactor">
    <cofactor evidence="1">
        <name>pyridoxal 5'-phosphate</name>
        <dbReference type="ChEBI" id="CHEBI:597326"/>
    </cofactor>
</comment>
<comment type="subunit">
    <text evidence="1">The glycine cleavage system is composed of four proteins: P, T, L and H. In this organism, the P 'protein' is a heterodimer of two subunits.</text>
</comment>
<comment type="similarity">
    <text evidence="1">Belongs to the GcvP family. C-terminal subunit subfamily.</text>
</comment>